<feature type="chain" id="PRO_0000253448" description="DNA-directed RNA polymerase II subunit RPB11">
    <location>
        <begin position="1"/>
        <end position="117"/>
    </location>
</feature>
<feature type="modified residue" description="N-acetylmethionine" evidence="1">
    <location>
        <position position="1"/>
    </location>
</feature>
<feature type="strand" evidence="6">
    <location>
        <begin position="8"/>
        <end position="10"/>
    </location>
</feature>
<feature type="strand" evidence="6">
    <location>
        <begin position="18"/>
        <end position="23"/>
    </location>
</feature>
<feature type="strand" evidence="6">
    <location>
        <begin position="30"/>
        <end position="36"/>
    </location>
</feature>
<feature type="helix" evidence="6">
    <location>
        <begin position="40"/>
        <end position="50"/>
    </location>
</feature>
<feature type="strand" evidence="6">
    <location>
        <begin position="56"/>
        <end position="62"/>
    </location>
</feature>
<feature type="strand" evidence="6">
    <location>
        <begin position="70"/>
        <end position="77"/>
    </location>
</feature>
<feature type="helix" evidence="6">
    <location>
        <begin position="83"/>
        <end position="112"/>
    </location>
</feature>
<gene>
    <name type="primary">POLR2J</name>
</gene>
<protein>
    <recommendedName>
        <fullName>DNA-directed RNA polymerase II subunit RPB11</fullName>
        <shortName>RNA polymerase II subunit B11</shortName>
    </recommendedName>
    <alternativeName>
        <fullName>DNA-directed RNA polymerase II subunit J</fullName>
    </alternativeName>
</protein>
<organism>
    <name type="scientific">Bos taurus</name>
    <name type="common">Bovine</name>
    <dbReference type="NCBI Taxonomy" id="9913"/>
    <lineage>
        <taxon>Eukaryota</taxon>
        <taxon>Metazoa</taxon>
        <taxon>Chordata</taxon>
        <taxon>Craniata</taxon>
        <taxon>Vertebrata</taxon>
        <taxon>Euteleostomi</taxon>
        <taxon>Mammalia</taxon>
        <taxon>Eutheria</taxon>
        <taxon>Laurasiatheria</taxon>
        <taxon>Artiodactyla</taxon>
        <taxon>Ruminantia</taxon>
        <taxon>Pecora</taxon>
        <taxon>Bovidae</taxon>
        <taxon>Bovinae</taxon>
        <taxon>Bos</taxon>
    </lineage>
</organism>
<name>RPB11_BOVIN</name>
<reference key="1">
    <citation type="submission" date="2005-10" db="EMBL/GenBank/DDBJ databases">
        <authorList>
            <consortium name="NIH - Mammalian Gene Collection (MGC) project"/>
        </authorList>
    </citation>
    <scope>NUCLEOTIDE SEQUENCE [LARGE SCALE MRNA]</scope>
    <source>
        <strain>Crossbred X Angus</strain>
        <tissue>Liver</tissue>
    </source>
</reference>
<reference key="2">
    <citation type="journal article" date="2006" name="Proc. Natl. Acad. Sci. U.S.A.">
        <title>A Mediator-responsive form of metazoan RNA polymerase II.</title>
        <authorList>
            <person name="Hu X."/>
            <person name="Malik S."/>
            <person name="Negroiu C.C."/>
            <person name="Hubbard K."/>
            <person name="Velalar C.N."/>
            <person name="Hampton B."/>
            <person name="Grosu D."/>
            <person name="Catalano J."/>
            <person name="Roeder R.G."/>
            <person name="Gnatt A."/>
        </authorList>
    </citation>
    <scope>FUNCTION OF POL II</scope>
    <scope>SUBUNIT</scope>
    <scope>IDENTIFICATION IN THE POL II AND POL II(G) COMPLEXES</scope>
</reference>
<reference key="3">
    <citation type="journal article" date="2016" name="Nature">
        <title>Structure of transcribing mammalian RNA polymerase II.</title>
        <authorList>
            <person name="Bernecky C."/>
            <person name="Herzog F."/>
            <person name="Baumeister W."/>
            <person name="Plitzko J.M."/>
            <person name="Cramer P."/>
        </authorList>
    </citation>
    <scope>STRUCTURE BY ELECTRON MICROSCOPY (3.40 ANGSTROMS)</scope>
    <scope>SUBUNIT</scope>
    <scope>FUNCTION OF POL II</scope>
</reference>
<reference key="4">
    <citation type="journal article" date="2017" name="Nat. Struct. Mol. Biol.">
        <title>Structure of a transcribing RNA polymerase II-DSIF complex reveals a multidentate DNA-RNA clamp.</title>
        <authorList>
            <person name="Bernecky C."/>
            <person name="Plitzko J.M."/>
            <person name="Cramer P."/>
        </authorList>
    </citation>
    <scope>STRUCTURE BY ELECTRON MICROSCOPY (3.70 ANGSTROMS)</scope>
    <scope>SUBUNIT</scope>
</reference>
<proteinExistence type="evidence at protein level"/>
<accession>Q32P79</accession>
<keyword id="KW-0002">3D-structure</keyword>
<keyword id="KW-0007">Acetylation</keyword>
<keyword id="KW-0240">DNA-directed RNA polymerase</keyword>
<keyword id="KW-0539">Nucleus</keyword>
<keyword id="KW-1185">Reference proteome</keyword>
<keyword id="KW-0804">Transcription</keyword>
<sequence length="117" mass="13293">MNAPPAFESFLLFEGEKKITINKDTKVPNACLFTINKEDHTLGNIIKSQLLKDPQVLFAGYKVPHPLEHKIIIRVQTTPDYSPQEAFTNAITDLISELSLLEERFRVAIKDKQEGIE</sequence>
<comment type="function">
    <text evidence="2 3">DNA-dependent RNA polymerase catalyzes the transcription of DNA into RNA using the four ribonucleoside triphosphates as substrates. Component of RNA polymerase II which synthesizes mRNA precursors and many functional non-coding RNAs. Pol II is the central component of the basal RNA polymerase II transcription machinery. It is composed of mobile elements that move relative to each other. POLR2J/RPB11 is part of the core element with the central large cleft.</text>
</comment>
<comment type="subunit">
    <text evidence="1 2 3 4">Component of the RNA polymerase II (Pol II) core complex consisting of 12 subunits: a ten-subunit catalytic core composed of POLR2A/RPB1, POLR2B/RPB2, POLR2C/RPB3, POLR2I/RPB9, POLR2J/RPB11, POLR2E/RPABC1, POLR2F/RPABC2, POLR2H/RPABC3, POLR2K/RPABC4 and POLR2L/RPABC5 and a mobile stalk composed of two subunits POLR2D/RPB4 and POLR2G/RPB7, protruding from the core and functioning primarily in transcription initiation. Part of Pol II(G) complex, in which Pol II core associates with an additional subunit POLR2M; unlike conventional Pol II, Pol II(G) functions as a transcriptional repressor. Part of TBP-based Pol II pre-initiation complex (PIC), in which Pol II core assembles with general transcription factors and other specific initiation factors including GTF2E1, GTF2E2, GTF2F1, GTF2F2, TCEA1, ERCC2, ERCC3, GTF2H2, GTF2H3, GTF2H4, GTF2H5, GTF2A1, GTF2A2, GTF2B and TBP; this large multi-subunit PIC complex mediates DNA unwinding and targets Pol II core to the transcription start site where the first phosphodiester bond forms. Interacts with PTPN6; this interaction promotes the recruitment of RNA pol II to the PCK1 promoter (By similarity).</text>
</comment>
<comment type="subcellular location">
    <subcellularLocation>
        <location evidence="1">Nucleus</location>
    </subcellularLocation>
</comment>
<comment type="similarity">
    <text evidence="5">Belongs to the archaeal Rpo11/eukaryotic RPB11/RPC19 RNA polymerase subunit family.</text>
</comment>
<dbReference type="EMBL" id="BC108226">
    <property type="protein sequence ID" value="AAI08227.1"/>
    <property type="molecule type" value="mRNA"/>
</dbReference>
<dbReference type="RefSeq" id="NP_001032560.1">
    <property type="nucleotide sequence ID" value="NM_001037483.2"/>
</dbReference>
<dbReference type="PDB" id="5FLM">
    <property type="method" value="EM"/>
    <property type="resolution" value="3.40 A"/>
    <property type="chains" value="K=1-117"/>
</dbReference>
<dbReference type="PDB" id="5OIK">
    <property type="method" value="EM"/>
    <property type="resolution" value="3.70 A"/>
    <property type="chains" value="K=1-117"/>
</dbReference>
<dbReference type="PDBsum" id="5FLM"/>
<dbReference type="PDBsum" id="5OIK"/>
<dbReference type="EMDB" id="EMD-3817"/>
<dbReference type="SMR" id="Q32P79"/>
<dbReference type="DIP" id="DIP-61196N"/>
<dbReference type="FunCoup" id="Q32P79">
    <property type="interactions" value="2323"/>
</dbReference>
<dbReference type="IntAct" id="Q32P79">
    <property type="interactions" value="3"/>
</dbReference>
<dbReference type="STRING" id="9913.ENSBTAP00000060312"/>
<dbReference type="PaxDb" id="9913-ENSBTAP00000007165"/>
<dbReference type="GeneID" id="540428"/>
<dbReference type="KEGG" id="bta:540428"/>
<dbReference type="CTD" id="5439"/>
<dbReference type="VEuPathDB" id="HostDB:ENSBTAG00000005446"/>
<dbReference type="eggNOG" id="KOG4392">
    <property type="taxonomic scope" value="Eukaryota"/>
</dbReference>
<dbReference type="HOGENOM" id="CLU_090381_2_2_1"/>
<dbReference type="InParanoid" id="Q32P79"/>
<dbReference type="OMA" id="MNAPSRY"/>
<dbReference type="OrthoDB" id="10248581at2759"/>
<dbReference type="TreeFam" id="TF103044"/>
<dbReference type="Reactome" id="R-BTA-112382">
    <property type="pathway name" value="Formation of RNA Pol II elongation complex"/>
</dbReference>
<dbReference type="Reactome" id="R-BTA-113418">
    <property type="pathway name" value="Formation of the Early Elongation Complex"/>
</dbReference>
<dbReference type="Reactome" id="R-BTA-5578749">
    <property type="pathway name" value="Transcriptional regulation by small RNAs"/>
</dbReference>
<dbReference type="Reactome" id="R-BTA-674695">
    <property type="pathway name" value="RNA Polymerase II Pre-transcription Events"/>
</dbReference>
<dbReference type="Reactome" id="R-BTA-6781823">
    <property type="pathway name" value="Formation of TC-NER Pre-Incision Complex"/>
</dbReference>
<dbReference type="Reactome" id="R-BTA-6782135">
    <property type="pathway name" value="Dual incision in TC-NER"/>
</dbReference>
<dbReference type="Reactome" id="R-BTA-6782210">
    <property type="pathway name" value="Gap-filling DNA repair synthesis and ligation in TC-NER"/>
</dbReference>
<dbReference type="Reactome" id="R-BTA-6796648">
    <property type="pathway name" value="TP53 Regulates Transcription of DNA Repair Genes"/>
</dbReference>
<dbReference type="Reactome" id="R-BTA-6803529">
    <property type="pathway name" value="FGFR2 alternative splicing"/>
</dbReference>
<dbReference type="Reactome" id="R-BTA-6807505">
    <property type="pathway name" value="RNA polymerase II transcribes snRNA genes"/>
</dbReference>
<dbReference type="Reactome" id="R-BTA-72086">
    <property type="pathway name" value="mRNA Capping"/>
</dbReference>
<dbReference type="Reactome" id="R-BTA-72163">
    <property type="pathway name" value="mRNA Splicing - Major Pathway"/>
</dbReference>
<dbReference type="Reactome" id="R-BTA-72165">
    <property type="pathway name" value="mRNA Splicing - Minor Pathway"/>
</dbReference>
<dbReference type="Reactome" id="R-BTA-72203">
    <property type="pathway name" value="Processing of Capped Intron-Containing Pre-mRNA"/>
</dbReference>
<dbReference type="Reactome" id="R-BTA-73776">
    <property type="pathway name" value="RNA Polymerase II Promoter Escape"/>
</dbReference>
<dbReference type="Reactome" id="R-BTA-73779">
    <property type="pathway name" value="RNA Polymerase II Transcription Pre-Initiation And Promoter Opening"/>
</dbReference>
<dbReference type="Reactome" id="R-BTA-75953">
    <property type="pathway name" value="RNA Polymerase II Transcription Initiation"/>
</dbReference>
<dbReference type="Reactome" id="R-BTA-75955">
    <property type="pathway name" value="RNA Polymerase II Transcription Elongation"/>
</dbReference>
<dbReference type="Reactome" id="R-BTA-76042">
    <property type="pathway name" value="RNA Polymerase II Transcription Initiation And Promoter Clearance"/>
</dbReference>
<dbReference type="Reactome" id="R-BTA-77075">
    <property type="pathway name" value="RNA Pol II CTD phosphorylation and interaction with CE"/>
</dbReference>
<dbReference type="Reactome" id="R-BTA-9018519">
    <property type="pathway name" value="Estrogen-dependent gene expression"/>
</dbReference>
<dbReference type="EvolutionaryTrace" id="Q32P79"/>
<dbReference type="Proteomes" id="UP000009136">
    <property type="component" value="Chromosome 25"/>
</dbReference>
<dbReference type="Bgee" id="ENSBTAG00000005446">
    <property type="expression patterns" value="Expressed in oocyte and 105 other cell types or tissues"/>
</dbReference>
<dbReference type="GO" id="GO:0005634">
    <property type="term" value="C:nucleus"/>
    <property type="evidence" value="ECO:0000250"/>
    <property type="project" value="UniProtKB"/>
</dbReference>
<dbReference type="GO" id="GO:0005665">
    <property type="term" value="C:RNA polymerase II, core complex"/>
    <property type="evidence" value="ECO:0000314"/>
    <property type="project" value="UniProtKB"/>
</dbReference>
<dbReference type="GO" id="GO:0003677">
    <property type="term" value="F:DNA binding"/>
    <property type="evidence" value="ECO:0007669"/>
    <property type="project" value="InterPro"/>
</dbReference>
<dbReference type="GO" id="GO:0003899">
    <property type="term" value="F:DNA-directed RNA polymerase activity"/>
    <property type="evidence" value="ECO:0007669"/>
    <property type="project" value="InterPro"/>
</dbReference>
<dbReference type="GO" id="GO:0046983">
    <property type="term" value="F:protein dimerization activity"/>
    <property type="evidence" value="ECO:0007669"/>
    <property type="project" value="InterPro"/>
</dbReference>
<dbReference type="GO" id="GO:0006366">
    <property type="term" value="P:transcription by RNA polymerase II"/>
    <property type="evidence" value="ECO:0000250"/>
    <property type="project" value="UniProtKB"/>
</dbReference>
<dbReference type="CDD" id="cd06926">
    <property type="entry name" value="RNAP_II_RPB11"/>
    <property type="match status" value="1"/>
</dbReference>
<dbReference type="FunFam" id="3.30.1360.10:FF:000003">
    <property type="entry name" value="DNA-directed RNA polymerase II subunit RPB11"/>
    <property type="match status" value="1"/>
</dbReference>
<dbReference type="Gene3D" id="3.30.1360.10">
    <property type="entry name" value="RNA polymerase, RBP11-like subunit"/>
    <property type="match status" value="1"/>
</dbReference>
<dbReference type="HAMAP" id="MF_00261">
    <property type="entry name" value="RNApol_arch_Rpo11"/>
    <property type="match status" value="1"/>
</dbReference>
<dbReference type="InterPro" id="IPR037685">
    <property type="entry name" value="RBP11"/>
</dbReference>
<dbReference type="InterPro" id="IPR036603">
    <property type="entry name" value="RBP11-like"/>
</dbReference>
<dbReference type="InterPro" id="IPR009025">
    <property type="entry name" value="RBP11-like_dimer"/>
</dbReference>
<dbReference type="InterPro" id="IPR008193">
    <property type="entry name" value="RNA_pol_Rpb11_13-16kDa_CS"/>
</dbReference>
<dbReference type="InterPro" id="IPR022905">
    <property type="entry name" value="Rpo11-like"/>
</dbReference>
<dbReference type="PANTHER" id="PTHR13946">
    <property type="entry name" value="DNA-DIRECTED RNA POLYMERASE I,II,III"/>
    <property type="match status" value="1"/>
</dbReference>
<dbReference type="PANTHER" id="PTHR13946:SF16">
    <property type="entry name" value="DNA-DIRECTED RNA POLYMERASE II SUBUNIT RPB11"/>
    <property type="match status" value="1"/>
</dbReference>
<dbReference type="Pfam" id="PF13656">
    <property type="entry name" value="RNA_pol_L_2"/>
    <property type="match status" value="1"/>
</dbReference>
<dbReference type="SUPFAM" id="SSF55257">
    <property type="entry name" value="RBP11-like subunits of RNA polymerase"/>
    <property type="match status" value="1"/>
</dbReference>
<dbReference type="PROSITE" id="PS01154">
    <property type="entry name" value="RNA_POL_L_13KD"/>
    <property type="match status" value="1"/>
</dbReference>
<evidence type="ECO:0000250" key="1">
    <source>
        <dbReference type="UniProtKB" id="P52435"/>
    </source>
</evidence>
<evidence type="ECO:0000269" key="2">
    <source>
    </source>
</evidence>
<evidence type="ECO:0000269" key="3">
    <source>
    </source>
</evidence>
<evidence type="ECO:0000269" key="4">
    <source>
    </source>
</evidence>
<evidence type="ECO:0000305" key="5"/>
<evidence type="ECO:0007829" key="6">
    <source>
        <dbReference type="PDB" id="5FLM"/>
    </source>
</evidence>